<evidence type="ECO:0000269" key="1">
    <source>
    </source>
</evidence>
<evidence type="ECO:0000305" key="2"/>
<evidence type="ECO:0007829" key="3">
    <source>
        <dbReference type="PDB" id="1FUX"/>
    </source>
</evidence>
<sequence length="183" mass="19476">MKTLIVSTVLAFITFSAQAAAFQVTSNEIKTGEQLTTSHVFSGFGCEGGNTSPSLTWSGVPEGTKSFAVTVYDPDAPTGSGWWHWTVVNIPATVTYLPVDAGRRDGTKLPTGAVQGRNDFGYAGFGGACPPKGDKPHHYQFKVWALKTEKIPVDSNSSGALVGYMLNANKIATAEITPVYEIK</sequence>
<name>YBCL_ECOLI</name>
<dbReference type="EMBL" id="U82598">
    <property type="protein sequence ID" value="AAB40742.1"/>
    <property type="molecule type" value="Genomic_DNA"/>
</dbReference>
<dbReference type="EMBL" id="U00096">
    <property type="protein sequence ID" value="AAC73646.1"/>
    <property type="molecule type" value="Genomic_DNA"/>
</dbReference>
<dbReference type="EMBL" id="AP009048">
    <property type="protein sequence ID" value="BAE76320.1"/>
    <property type="molecule type" value="Genomic_DNA"/>
</dbReference>
<dbReference type="PIR" id="G64786">
    <property type="entry name" value="G64786"/>
</dbReference>
<dbReference type="RefSeq" id="NP_415077.1">
    <property type="nucleotide sequence ID" value="NC_000913.3"/>
</dbReference>
<dbReference type="RefSeq" id="WP_001306955.1">
    <property type="nucleotide sequence ID" value="NZ_LN832404.1"/>
</dbReference>
<dbReference type="PDB" id="1FUX">
    <property type="method" value="X-ray"/>
    <property type="resolution" value="1.81 A"/>
    <property type="chains" value="A/B=22-183"/>
</dbReference>
<dbReference type="PDBsum" id="1FUX"/>
<dbReference type="SMR" id="P77368"/>
<dbReference type="BioGRID" id="4262074">
    <property type="interactions" value="23"/>
</dbReference>
<dbReference type="FunCoup" id="P77368">
    <property type="interactions" value="240"/>
</dbReference>
<dbReference type="STRING" id="511145.b0545"/>
<dbReference type="jPOST" id="P77368"/>
<dbReference type="PaxDb" id="511145-b0545"/>
<dbReference type="EnsemblBacteria" id="AAC73646">
    <property type="protein sequence ID" value="AAC73646"/>
    <property type="gene ID" value="b0545"/>
</dbReference>
<dbReference type="GeneID" id="945165"/>
<dbReference type="KEGG" id="ecj:JW0533"/>
<dbReference type="KEGG" id="eco:b0545"/>
<dbReference type="KEGG" id="ecoc:C3026_02685"/>
<dbReference type="PATRIC" id="fig|1411691.4.peg.1732"/>
<dbReference type="EchoBASE" id="EB3393"/>
<dbReference type="eggNOG" id="COG1881">
    <property type="taxonomic scope" value="Bacteria"/>
</dbReference>
<dbReference type="HOGENOM" id="CLU_083918_2_0_6"/>
<dbReference type="InParanoid" id="P77368"/>
<dbReference type="OMA" id="LRWEGFP"/>
<dbReference type="OrthoDB" id="9797506at2"/>
<dbReference type="PhylomeDB" id="P77368"/>
<dbReference type="BioCyc" id="EcoCyc:G6301-MONOMER"/>
<dbReference type="EvolutionaryTrace" id="P77368"/>
<dbReference type="PRO" id="PR:P77368"/>
<dbReference type="Proteomes" id="UP000000625">
    <property type="component" value="Chromosome"/>
</dbReference>
<dbReference type="GO" id="GO:0030288">
    <property type="term" value="C:outer membrane-bounded periplasmic space"/>
    <property type="evidence" value="ECO:0000314"/>
    <property type="project" value="EcoCyc"/>
</dbReference>
<dbReference type="CDD" id="cd00865">
    <property type="entry name" value="PEBP_bact_arch"/>
    <property type="match status" value="1"/>
</dbReference>
<dbReference type="FunFam" id="3.90.280.10:FF:000005">
    <property type="entry name" value="Phage kinase inhibitor"/>
    <property type="match status" value="1"/>
</dbReference>
<dbReference type="Gene3D" id="3.90.280.10">
    <property type="entry name" value="PEBP-like"/>
    <property type="match status" value="1"/>
</dbReference>
<dbReference type="InterPro" id="IPR008914">
    <property type="entry name" value="PEBP"/>
</dbReference>
<dbReference type="InterPro" id="IPR036610">
    <property type="entry name" value="PEBP-like_sf"/>
</dbReference>
<dbReference type="InterPro" id="IPR005247">
    <property type="entry name" value="YbhB_YbcL/LppC-like"/>
</dbReference>
<dbReference type="NCBIfam" id="NF007330">
    <property type="entry name" value="PRK09818.1"/>
    <property type="match status" value="1"/>
</dbReference>
<dbReference type="NCBIfam" id="TIGR00481">
    <property type="entry name" value="YbhB/YbcL family Raf kinase inhibitor-like protein"/>
    <property type="match status" value="1"/>
</dbReference>
<dbReference type="PANTHER" id="PTHR30289:SF1">
    <property type="entry name" value="PEBP (PHOSPHATIDYLETHANOLAMINE-BINDING PROTEIN) FAMILY PROTEIN"/>
    <property type="match status" value="1"/>
</dbReference>
<dbReference type="PANTHER" id="PTHR30289">
    <property type="entry name" value="UNCHARACTERIZED PROTEIN YBCL-RELATED"/>
    <property type="match status" value="1"/>
</dbReference>
<dbReference type="Pfam" id="PF01161">
    <property type="entry name" value="PBP"/>
    <property type="match status" value="1"/>
</dbReference>
<dbReference type="SUPFAM" id="SSF49777">
    <property type="entry name" value="PEBP-like"/>
    <property type="match status" value="1"/>
</dbReference>
<keyword id="KW-0002">3D-structure</keyword>
<keyword id="KW-1015">Disulfide bond</keyword>
<keyword id="KW-0574">Periplasm</keyword>
<keyword id="KW-1185">Reference proteome</keyword>
<keyword id="KW-0732">Signal</keyword>
<reference key="1">
    <citation type="submission" date="1997-01" db="EMBL/GenBank/DDBJ databases">
        <title>Sequence of minutes 4-25 of Escherichia coli.</title>
        <authorList>
            <person name="Chung E."/>
            <person name="Allen E."/>
            <person name="Araujo R."/>
            <person name="Aparicio A.M."/>
            <person name="Davis K."/>
            <person name="Duncan M."/>
            <person name="Federspiel N."/>
            <person name="Hyman R."/>
            <person name="Kalman S."/>
            <person name="Komp C."/>
            <person name="Kurdi O."/>
            <person name="Lew H."/>
            <person name="Lin D."/>
            <person name="Namath A."/>
            <person name="Oefner P."/>
            <person name="Roberts D."/>
            <person name="Schramm S."/>
            <person name="Davis R.W."/>
        </authorList>
    </citation>
    <scope>NUCLEOTIDE SEQUENCE [LARGE SCALE GENOMIC DNA]</scope>
    <source>
        <strain>K12 / MG1655 / ATCC 47076</strain>
    </source>
</reference>
<reference key="2">
    <citation type="journal article" date="1997" name="Science">
        <title>The complete genome sequence of Escherichia coli K-12.</title>
        <authorList>
            <person name="Blattner F.R."/>
            <person name="Plunkett G. III"/>
            <person name="Bloch C.A."/>
            <person name="Perna N.T."/>
            <person name="Burland V."/>
            <person name="Riley M."/>
            <person name="Collado-Vides J."/>
            <person name="Glasner J.D."/>
            <person name="Rode C.K."/>
            <person name="Mayhew G.F."/>
            <person name="Gregor J."/>
            <person name="Davis N.W."/>
            <person name="Kirkpatrick H.A."/>
            <person name="Goeden M.A."/>
            <person name="Rose D.J."/>
            <person name="Mau B."/>
            <person name="Shao Y."/>
        </authorList>
    </citation>
    <scope>NUCLEOTIDE SEQUENCE [LARGE SCALE GENOMIC DNA]</scope>
    <source>
        <strain>K12 / MG1655 / ATCC 47076</strain>
    </source>
</reference>
<reference key="3">
    <citation type="journal article" date="2006" name="Mol. Syst. Biol.">
        <title>Highly accurate genome sequences of Escherichia coli K-12 strains MG1655 and W3110.</title>
        <authorList>
            <person name="Hayashi K."/>
            <person name="Morooka N."/>
            <person name="Yamamoto Y."/>
            <person name="Fujita K."/>
            <person name="Isono K."/>
            <person name="Choi S."/>
            <person name="Ohtsubo E."/>
            <person name="Baba T."/>
            <person name="Wanner B.L."/>
            <person name="Mori H."/>
            <person name="Horiuchi T."/>
        </authorList>
    </citation>
    <scope>NUCLEOTIDE SEQUENCE [LARGE SCALE GENOMIC DNA]</scope>
    <source>
        <strain>K12 / W3110 / ATCC 27325 / DSM 5911</strain>
    </source>
</reference>
<reference key="4">
    <citation type="journal article" date="2001" name="J. Mol. Biol.">
        <title>Crystal structures of YBHB and YBCL from Escherichia coli, two bacterial homologues to a Raf kinase inhibitor protein.</title>
        <authorList>
            <person name="Serre L."/>
            <person name="Pereira de Jesus K."/>
            <person name="Zelwer C."/>
            <person name="Bureaud N."/>
            <person name="Schoentgen F."/>
            <person name="Benedetti H."/>
        </authorList>
    </citation>
    <scope>X-RAY CRYSTALLOGRAPHY (1.81 ANGSTROMS)</scope>
    <scope>SUBUNIT</scope>
    <scope>SUBCELLULAR LOCATION</scope>
</reference>
<comment type="subunit">
    <text evidence="1">Homodimer.</text>
</comment>
<comment type="subcellular location">
    <subcellularLocation>
        <location evidence="1">Periplasm</location>
    </subcellularLocation>
</comment>
<comment type="miscellaneous">
    <text>Encoded by the cryptic lambdoid prophage DLP12.</text>
</comment>
<comment type="similarity">
    <text evidence="2">Belongs to the UPF0098 family.</text>
</comment>
<accession>P77368</accession>
<accession>Q2MBN6</accession>
<protein>
    <recommendedName>
        <fullName>UPF0098 protein YbcL</fullName>
    </recommendedName>
</protein>
<organism>
    <name type="scientific">Escherichia coli (strain K12)</name>
    <dbReference type="NCBI Taxonomy" id="83333"/>
    <lineage>
        <taxon>Bacteria</taxon>
        <taxon>Pseudomonadati</taxon>
        <taxon>Pseudomonadota</taxon>
        <taxon>Gammaproteobacteria</taxon>
        <taxon>Enterobacterales</taxon>
        <taxon>Enterobacteriaceae</taxon>
        <taxon>Escherichia</taxon>
    </lineage>
</organism>
<gene>
    <name type="primary">ybcL</name>
    <name type="ordered locus">b0545</name>
    <name type="ordered locus">JW0533</name>
</gene>
<proteinExistence type="evidence at protein level"/>
<feature type="signal peptide">
    <location>
        <begin position="1"/>
        <end position="21"/>
    </location>
</feature>
<feature type="chain" id="PRO_0000036212" description="UPF0098 protein YbcL">
    <location>
        <begin position="22"/>
        <end position="183"/>
    </location>
</feature>
<feature type="disulfide bond">
    <location>
        <begin position="46"/>
        <end position="129"/>
    </location>
</feature>
<feature type="strand" evidence="3">
    <location>
        <begin position="23"/>
        <end position="25"/>
    </location>
</feature>
<feature type="helix" evidence="3">
    <location>
        <begin position="37"/>
        <end position="39"/>
    </location>
</feature>
<feature type="strand" evidence="3">
    <location>
        <begin position="55"/>
        <end position="58"/>
    </location>
</feature>
<feature type="strand" evidence="3">
    <location>
        <begin position="66"/>
        <end position="73"/>
    </location>
</feature>
<feature type="strand" evidence="3">
    <location>
        <begin position="82"/>
        <end position="91"/>
    </location>
</feature>
<feature type="turn" evidence="3">
    <location>
        <begin position="99"/>
        <end position="102"/>
    </location>
</feature>
<feature type="strand" evidence="3">
    <location>
        <begin position="121"/>
        <end position="124"/>
    </location>
</feature>
<feature type="strand" evidence="3">
    <location>
        <begin position="140"/>
        <end position="147"/>
    </location>
</feature>
<feature type="helix" evidence="3">
    <location>
        <begin position="159"/>
        <end position="167"/>
    </location>
</feature>
<feature type="strand" evidence="3">
    <location>
        <begin position="170"/>
        <end position="176"/>
    </location>
</feature>